<sequence>MLLKNWPSRRIQRDKSKRAGIGGTNNRIPYTLLLCYVNVQKPFRIVDL</sequence>
<accession>P54429</accession>
<reference key="1">
    <citation type="journal article" date="1996" name="Microbiology">
        <title>Systematic sequencing of the 283 kb 210 degrees-232 degrees region of the Bacillus subtilis genome containing the skin element and many sporulation genes.</title>
        <authorList>
            <person name="Mizuno M."/>
            <person name="Masuda S."/>
            <person name="Takemaru K."/>
            <person name="Hosono S."/>
            <person name="Sato T."/>
            <person name="Takeuchi M."/>
            <person name="Kobayashi Y."/>
        </authorList>
    </citation>
    <scope>NUCLEOTIDE SEQUENCE [GENOMIC DNA]</scope>
    <source>
        <strain>168 / JH642</strain>
    </source>
</reference>
<reference key="2">
    <citation type="journal article" date="1997" name="Nature">
        <title>The complete genome sequence of the Gram-positive bacterium Bacillus subtilis.</title>
        <authorList>
            <person name="Kunst F."/>
            <person name="Ogasawara N."/>
            <person name="Moszer I."/>
            <person name="Albertini A.M."/>
            <person name="Alloni G."/>
            <person name="Azevedo V."/>
            <person name="Bertero M.G."/>
            <person name="Bessieres P."/>
            <person name="Bolotin A."/>
            <person name="Borchert S."/>
            <person name="Borriss R."/>
            <person name="Boursier L."/>
            <person name="Brans A."/>
            <person name="Braun M."/>
            <person name="Brignell S.C."/>
            <person name="Bron S."/>
            <person name="Brouillet S."/>
            <person name="Bruschi C.V."/>
            <person name="Caldwell B."/>
            <person name="Capuano V."/>
            <person name="Carter N.M."/>
            <person name="Choi S.-K."/>
            <person name="Codani J.-J."/>
            <person name="Connerton I.F."/>
            <person name="Cummings N.J."/>
            <person name="Daniel R.A."/>
            <person name="Denizot F."/>
            <person name="Devine K.M."/>
            <person name="Duesterhoeft A."/>
            <person name="Ehrlich S.D."/>
            <person name="Emmerson P.T."/>
            <person name="Entian K.-D."/>
            <person name="Errington J."/>
            <person name="Fabret C."/>
            <person name="Ferrari E."/>
            <person name="Foulger D."/>
            <person name="Fritz C."/>
            <person name="Fujita M."/>
            <person name="Fujita Y."/>
            <person name="Fuma S."/>
            <person name="Galizzi A."/>
            <person name="Galleron N."/>
            <person name="Ghim S.-Y."/>
            <person name="Glaser P."/>
            <person name="Goffeau A."/>
            <person name="Golightly E.J."/>
            <person name="Grandi G."/>
            <person name="Guiseppi G."/>
            <person name="Guy B.J."/>
            <person name="Haga K."/>
            <person name="Haiech J."/>
            <person name="Harwood C.R."/>
            <person name="Henaut A."/>
            <person name="Hilbert H."/>
            <person name="Holsappel S."/>
            <person name="Hosono S."/>
            <person name="Hullo M.-F."/>
            <person name="Itaya M."/>
            <person name="Jones L.-M."/>
            <person name="Joris B."/>
            <person name="Karamata D."/>
            <person name="Kasahara Y."/>
            <person name="Klaerr-Blanchard M."/>
            <person name="Klein C."/>
            <person name="Kobayashi Y."/>
            <person name="Koetter P."/>
            <person name="Koningstein G."/>
            <person name="Krogh S."/>
            <person name="Kumano M."/>
            <person name="Kurita K."/>
            <person name="Lapidus A."/>
            <person name="Lardinois S."/>
            <person name="Lauber J."/>
            <person name="Lazarevic V."/>
            <person name="Lee S.-M."/>
            <person name="Levine A."/>
            <person name="Liu H."/>
            <person name="Masuda S."/>
            <person name="Mauel C."/>
            <person name="Medigue C."/>
            <person name="Medina N."/>
            <person name="Mellado R.P."/>
            <person name="Mizuno M."/>
            <person name="Moestl D."/>
            <person name="Nakai S."/>
            <person name="Noback M."/>
            <person name="Noone D."/>
            <person name="O'Reilly M."/>
            <person name="Ogawa K."/>
            <person name="Ogiwara A."/>
            <person name="Oudega B."/>
            <person name="Park S.-H."/>
            <person name="Parro V."/>
            <person name="Pohl T.M."/>
            <person name="Portetelle D."/>
            <person name="Porwollik S."/>
            <person name="Prescott A.M."/>
            <person name="Presecan E."/>
            <person name="Pujic P."/>
            <person name="Purnelle B."/>
            <person name="Rapoport G."/>
            <person name="Rey M."/>
            <person name="Reynolds S."/>
            <person name="Rieger M."/>
            <person name="Rivolta C."/>
            <person name="Rocha E."/>
            <person name="Roche B."/>
            <person name="Rose M."/>
            <person name="Sadaie Y."/>
            <person name="Sato T."/>
            <person name="Scanlan E."/>
            <person name="Schleich S."/>
            <person name="Schroeter R."/>
            <person name="Scoffone F."/>
            <person name="Sekiguchi J."/>
            <person name="Sekowska A."/>
            <person name="Seror S.J."/>
            <person name="Serror P."/>
            <person name="Shin B.-S."/>
            <person name="Soldo B."/>
            <person name="Sorokin A."/>
            <person name="Tacconi E."/>
            <person name="Takagi T."/>
            <person name="Takahashi H."/>
            <person name="Takemaru K."/>
            <person name="Takeuchi M."/>
            <person name="Tamakoshi A."/>
            <person name="Tanaka T."/>
            <person name="Terpstra P."/>
            <person name="Tognoni A."/>
            <person name="Tosato V."/>
            <person name="Uchiyama S."/>
            <person name="Vandenbol M."/>
            <person name="Vannier F."/>
            <person name="Vassarotti A."/>
            <person name="Viari A."/>
            <person name="Wambutt R."/>
            <person name="Wedler E."/>
            <person name="Wedler H."/>
            <person name="Weitzenegger T."/>
            <person name="Winters P."/>
            <person name="Wipat A."/>
            <person name="Yamamoto H."/>
            <person name="Yamane K."/>
            <person name="Yasumoto K."/>
            <person name="Yata K."/>
            <person name="Yoshida K."/>
            <person name="Yoshikawa H.-F."/>
            <person name="Zumstein E."/>
            <person name="Yoshikawa H."/>
            <person name="Danchin A."/>
        </authorList>
    </citation>
    <scope>NUCLEOTIDE SEQUENCE [LARGE SCALE GENOMIC DNA]</scope>
    <source>
        <strain>168</strain>
    </source>
</reference>
<reference key="3">
    <citation type="journal article" date="1995" name="J. Bacteriol.">
        <title>Two highly similar multidrug transporters of Bacillus subtilis whose expression is differentially regulated.</title>
        <authorList>
            <person name="Ahmed M."/>
            <person name="Lyass L."/>
            <person name="Markham P.N."/>
            <person name="Taylor S.S."/>
            <person name="Vazquez-Laslop N."/>
            <person name="Neyfakh A.A."/>
        </authorList>
    </citation>
    <scope>NUCLEOTIDE SEQUENCE [GENOMIC DNA] OF 1-33</scope>
    <source>
        <strain>168 / BD170</strain>
    </source>
</reference>
<gene>
    <name type="primary">yrkB</name>
    <name type="ordered locus">BSU26570</name>
</gene>
<organism>
    <name type="scientific">Bacillus subtilis (strain 168)</name>
    <dbReference type="NCBI Taxonomy" id="224308"/>
    <lineage>
        <taxon>Bacteria</taxon>
        <taxon>Bacillati</taxon>
        <taxon>Bacillota</taxon>
        <taxon>Bacilli</taxon>
        <taxon>Bacillales</taxon>
        <taxon>Bacillaceae</taxon>
        <taxon>Bacillus</taxon>
    </lineage>
</organism>
<keyword id="KW-1185">Reference proteome</keyword>
<dbReference type="EMBL" id="D84432">
    <property type="protein sequence ID" value="BAA12357.1"/>
    <property type="molecule type" value="Genomic_DNA"/>
</dbReference>
<dbReference type="EMBL" id="AL009126">
    <property type="protein sequence ID" value="CAB14598.1"/>
    <property type="molecule type" value="Genomic_DNA"/>
</dbReference>
<dbReference type="EMBL" id="L32599">
    <property type="status" value="NOT_ANNOTATED_CDS"/>
    <property type="molecule type" value="Genomic_DNA"/>
</dbReference>
<dbReference type="PIR" id="H69975">
    <property type="entry name" value="H69975"/>
</dbReference>
<dbReference type="RefSeq" id="NP_390534.1">
    <property type="nucleotide sequence ID" value="NC_000964.3"/>
</dbReference>
<dbReference type="RefSeq" id="WP_009967843.1">
    <property type="nucleotide sequence ID" value="NZ_OZ025638.1"/>
</dbReference>
<dbReference type="FunCoup" id="P54429">
    <property type="interactions" value="5"/>
</dbReference>
<dbReference type="STRING" id="224308.BSU26570"/>
<dbReference type="PaxDb" id="224308-BSU26570"/>
<dbReference type="EnsemblBacteria" id="CAB14598">
    <property type="protein sequence ID" value="CAB14598"/>
    <property type="gene ID" value="BSU_26570"/>
</dbReference>
<dbReference type="GeneID" id="937648"/>
<dbReference type="KEGG" id="bsu:BSU26570"/>
<dbReference type="PATRIC" id="fig|224308.179.peg.2887"/>
<dbReference type="InParanoid" id="P54429"/>
<dbReference type="OrthoDB" id="9860304at2"/>
<dbReference type="BioCyc" id="BSUB:BSU26570-MONOMER"/>
<dbReference type="Proteomes" id="UP000001570">
    <property type="component" value="Chromosome"/>
</dbReference>
<proteinExistence type="predicted"/>
<protein>
    <recommendedName>
        <fullName>Uncharacterized protein YrkB</fullName>
    </recommendedName>
</protein>
<feature type="chain" id="PRO_0000049868" description="Uncharacterized protein YrkB">
    <location>
        <begin position="1"/>
        <end position="48"/>
    </location>
</feature>
<feature type="region of interest" description="Disordered" evidence="1">
    <location>
        <begin position="1"/>
        <end position="20"/>
    </location>
</feature>
<name>YRKB_BACSU</name>
<evidence type="ECO:0000256" key="1">
    <source>
        <dbReference type="SAM" id="MobiDB-lite"/>
    </source>
</evidence>